<sequence length="508" mass="56599">MASLLWRDTSKNIAAILEKLPADYAVDYDVPNNVEDGYITINKKNFTYHVVISGVRKYSPDVEAIVKKKSGLKSIITIEKVEKIEPLSFMEFRVGGKTLEAMGSFEVAERQVTEIKEKYGENLSEDVQKVLDDARAMGFTLPESVAEEIARRRTEWGEKAYKNILKRIGEEIGNELIDPYEAVGIIAAQSIGEPGTQMTMRTFHFAGVREMNVTLGLPRLIEIVDARRIPSTPSMTIYLRPEYETNDEVVMDVVKRLENTSISDVADIITDIGELTVTVRPDPRKTKDRLIEMEDIMNAISKIKGITVMEDSGQIIIKPQQESFKKLYLLQEQIKGLTIKGISGIKRAIARVEGKEHRWVIYTQGSNLKDVLEVDEVDPTRTYTNDIVEIANVLGIEAARNAILNEALRTLQEQGLNVDVRHLMLVADMMTFSGSVRAVGRTGISGRKSSVLARAAFEITTKHLLRAGIMGEVDKLAGVAENIIVGQPITLGTGAVDIIYKGYPKTKK</sequence>
<keyword id="KW-0963">Cytoplasm</keyword>
<keyword id="KW-0903">Direct protein sequencing</keyword>
<keyword id="KW-0238">DNA-binding</keyword>
<keyword id="KW-0240">DNA-directed RNA polymerase</keyword>
<keyword id="KW-0548">Nucleotidyltransferase</keyword>
<keyword id="KW-1185">Reference proteome</keyword>
<keyword id="KW-0804">Transcription</keyword>
<keyword id="KW-0808">Transferase</keyword>
<feature type="chain" id="PRO_0000074028" description="DNA-directed RNA polymerase subunit Rpo1C">
    <location>
        <begin position="1"/>
        <end position="508"/>
    </location>
</feature>
<feature type="region of interest" description="Unknown">
    <location>
        <begin position="1"/>
        <end position="123"/>
    </location>
</feature>
<feature type="region of interest" description="DNA-directed RNA polymerase subunit Rpo1C">
    <location>
        <begin position="124"/>
        <end position="508"/>
    </location>
</feature>
<accession>Q03586</accession>
<dbReference type="EC" id="2.7.7.6" evidence="1"/>
<dbReference type="EMBL" id="X68198">
    <property type="protein sequence ID" value="CAA48282.1"/>
    <property type="molecule type" value="Genomic_DNA"/>
</dbReference>
<dbReference type="EMBL" id="AL445064">
    <property type="protein sequence ID" value="CAC11536.1"/>
    <property type="status" value="ALT_INIT"/>
    <property type="molecule type" value="Genomic_DNA"/>
</dbReference>
<dbReference type="PIR" id="S26724">
    <property type="entry name" value="S26724"/>
</dbReference>
<dbReference type="RefSeq" id="WP_048162261.1">
    <property type="nucleotide sequence ID" value="NC_002578.1"/>
</dbReference>
<dbReference type="SMR" id="Q03586"/>
<dbReference type="FunCoup" id="Q03586">
    <property type="interactions" value="7"/>
</dbReference>
<dbReference type="STRING" id="273075.gene:9571612"/>
<dbReference type="PaxDb" id="273075-Ta0392"/>
<dbReference type="EnsemblBacteria" id="CAC11536">
    <property type="protein sequence ID" value="CAC11536"/>
    <property type="gene ID" value="CAC11536"/>
</dbReference>
<dbReference type="KEGG" id="tac:Ta0392"/>
<dbReference type="eggNOG" id="arCOG04256">
    <property type="taxonomic scope" value="Archaea"/>
</dbReference>
<dbReference type="HOGENOM" id="CLU_037097_1_0_2"/>
<dbReference type="InParanoid" id="Q03586"/>
<dbReference type="OrthoDB" id="372142at2157"/>
<dbReference type="Proteomes" id="UP000001024">
    <property type="component" value="Chromosome"/>
</dbReference>
<dbReference type="GO" id="GO:0005737">
    <property type="term" value="C:cytoplasm"/>
    <property type="evidence" value="ECO:0007669"/>
    <property type="project" value="UniProtKB-SubCell"/>
</dbReference>
<dbReference type="GO" id="GO:0000428">
    <property type="term" value="C:DNA-directed RNA polymerase complex"/>
    <property type="evidence" value="ECO:0007669"/>
    <property type="project" value="UniProtKB-KW"/>
</dbReference>
<dbReference type="GO" id="GO:0003677">
    <property type="term" value="F:DNA binding"/>
    <property type="evidence" value="ECO:0007669"/>
    <property type="project" value="UniProtKB-UniRule"/>
</dbReference>
<dbReference type="GO" id="GO:0003899">
    <property type="term" value="F:DNA-directed RNA polymerase activity"/>
    <property type="evidence" value="ECO:0007669"/>
    <property type="project" value="UniProtKB-UniRule"/>
</dbReference>
<dbReference type="GO" id="GO:0006351">
    <property type="term" value="P:DNA-templated transcription"/>
    <property type="evidence" value="ECO:0007669"/>
    <property type="project" value="UniProtKB-UniRule"/>
</dbReference>
<dbReference type="CDD" id="cd06528">
    <property type="entry name" value="RNAP_A"/>
    <property type="match status" value="1"/>
</dbReference>
<dbReference type="Gene3D" id="1.10.150.390">
    <property type="match status" value="1"/>
</dbReference>
<dbReference type="HAMAP" id="MF_00411">
    <property type="entry name" value="RNApol_arch_Rpo1C"/>
    <property type="match status" value="1"/>
</dbReference>
<dbReference type="InterPro" id="IPR045867">
    <property type="entry name" value="DNA-dir_RpoC_beta_prime"/>
</dbReference>
<dbReference type="InterPro" id="IPR007081">
    <property type="entry name" value="RNA_pol_Rpb1_5"/>
</dbReference>
<dbReference type="InterPro" id="IPR012757">
    <property type="entry name" value="RPO1C"/>
</dbReference>
<dbReference type="NCBIfam" id="TIGR02389">
    <property type="entry name" value="RNA_pol_rpoA2"/>
    <property type="match status" value="1"/>
</dbReference>
<dbReference type="PANTHER" id="PTHR19376">
    <property type="entry name" value="DNA-DIRECTED RNA POLYMERASE"/>
    <property type="match status" value="1"/>
</dbReference>
<dbReference type="PANTHER" id="PTHR19376:SF32">
    <property type="entry name" value="DNA-DIRECTED RNA POLYMERASE III SUBUNIT RPC1"/>
    <property type="match status" value="1"/>
</dbReference>
<dbReference type="Pfam" id="PF04998">
    <property type="entry name" value="RNA_pol_Rpb1_5"/>
    <property type="match status" value="1"/>
</dbReference>
<dbReference type="SUPFAM" id="SSF64484">
    <property type="entry name" value="beta and beta-prime subunits of DNA dependent RNA-polymerase"/>
    <property type="match status" value="1"/>
</dbReference>
<comment type="function">
    <text evidence="1">DNA-dependent RNA polymerase (RNAP) catalyzes the transcription of DNA into RNA using the four ribonucleoside triphosphates as substrates. Forms part of the jaw domain.</text>
</comment>
<comment type="catalytic activity">
    <reaction evidence="1">
        <text>RNA(n) + a ribonucleoside 5'-triphosphate = RNA(n+1) + diphosphate</text>
        <dbReference type="Rhea" id="RHEA:21248"/>
        <dbReference type="Rhea" id="RHEA-COMP:14527"/>
        <dbReference type="Rhea" id="RHEA-COMP:17342"/>
        <dbReference type="ChEBI" id="CHEBI:33019"/>
        <dbReference type="ChEBI" id="CHEBI:61557"/>
        <dbReference type="ChEBI" id="CHEBI:140395"/>
        <dbReference type="EC" id="2.7.7.6"/>
    </reaction>
</comment>
<comment type="subunit">
    <text evidence="1">Part of the RNA polymerase complex.</text>
</comment>
<comment type="subcellular location">
    <subcellularLocation>
        <location evidence="1">Cytoplasm</location>
    </subcellularLocation>
</comment>
<comment type="similarity">
    <text evidence="1">Belongs to the RNA polymerase beta' chain family.</text>
</comment>
<comment type="sequence caution" evidence="2">
    <conflict type="erroneous initiation">
        <sequence resource="EMBL-CDS" id="CAC11536"/>
    </conflict>
    <text>Extended N-terminus.</text>
</comment>
<proteinExistence type="evidence at protein level"/>
<organism>
    <name type="scientific">Thermoplasma acidophilum (strain ATCC 25905 / DSM 1728 / JCM 9062 / NBRC 15155 / AMRC-C165)</name>
    <dbReference type="NCBI Taxonomy" id="273075"/>
    <lineage>
        <taxon>Archaea</taxon>
        <taxon>Methanobacteriati</taxon>
        <taxon>Thermoplasmatota</taxon>
        <taxon>Thermoplasmata</taxon>
        <taxon>Thermoplasmatales</taxon>
        <taxon>Thermoplasmataceae</taxon>
        <taxon>Thermoplasma</taxon>
    </lineage>
</organism>
<gene>
    <name evidence="1" type="primary">rpo1C</name>
    <name evidence="1" type="synonym">rpoA2</name>
    <name type="ordered locus">Ta0392</name>
</gene>
<reference key="1">
    <citation type="journal article" date="1992" name="Nucleic Acids Res.">
        <title>Nucleotide sequence of the genes encoding the subunits H, B, A' and A'' of the DNA-dependent RNA polymerase and the initiator tRNA from Thermoplasma acidophilum.</title>
        <authorList>
            <person name="Klenk H.-P."/>
            <person name="Renner O."/>
            <person name="Schwass V."/>
            <person name="Zillig W."/>
        </authorList>
    </citation>
    <scope>NUCLEOTIDE SEQUENCE [GENOMIC DNA]</scope>
    <scope>PARTIAL PROTEIN SEQUENCE</scope>
    <source>
        <strain>ATCC 25905 / DSM 1728 / JCM 9062 / NBRC 15155 / AMRC-C165</strain>
    </source>
</reference>
<reference key="2">
    <citation type="journal article" date="2000" name="Nature">
        <title>The genome sequence of the thermoacidophilic scavenger Thermoplasma acidophilum.</title>
        <authorList>
            <person name="Ruepp A."/>
            <person name="Graml W."/>
            <person name="Santos-Martinez M.-L."/>
            <person name="Koretke K.K."/>
            <person name="Volker C."/>
            <person name="Mewes H.-W."/>
            <person name="Frishman D."/>
            <person name="Stocker S."/>
            <person name="Lupas A.N."/>
            <person name="Baumeister W."/>
        </authorList>
    </citation>
    <scope>NUCLEOTIDE SEQUENCE [LARGE SCALE GENOMIC DNA]</scope>
    <source>
        <strain>ATCC 25905 / DSM 1728 / JCM 9062 / NBRC 15155 / AMRC-C165</strain>
    </source>
</reference>
<protein>
    <recommendedName>
        <fullName evidence="1">DNA-directed RNA polymerase subunit Rpo1C</fullName>
        <ecNumber evidence="1">2.7.7.6</ecNumber>
    </recommendedName>
    <alternativeName>
        <fullName evidence="1">DNA-directed RNA polymerase subunit A''</fullName>
    </alternativeName>
</protein>
<evidence type="ECO:0000255" key="1">
    <source>
        <dbReference type="HAMAP-Rule" id="MF_00411"/>
    </source>
</evidence>
<evidence type="ECO:0000305" key="2"/>
<name>RPO1C_THEAC</name>